<gene>
    <name evidence="1" type="primary">tsaD</name>
    <name type="synonym">gcp</name>
    <name type="ordered locus">OCAR_4327</name>
    <name type="ordered locus">OCA5_c01980</name>
</gene>
<organism>
    <name type="scientific">Afipia carboxidovorans (strain ATCC 49405 / DSM 1227 / KCTC 32145 / OM5)</name>
    <name type="common">Oligotropha carboxidovorans</name>
    <dbReference type="NCBI Taxonomy" id="504832"/>
    <lineage>
        <taxon>Bacteria</taxon>
        <taxon>Pseudomonadati</taxon>
        <taxon>Pseudomonadota</taxon>
        <taxon>Alphaproteobacteria</taxon>
        <taxon>Hyphomicrobiales</taxon>
        <taxon>Nitrobacteraceae</taxon>
        <taxon>Afipia</taxon>
    </lineage>
</organism>
<feature type="chain" id="PRO_1000146002" description="tRNA N6-adenosine threonylcarbamoyltransferase">
    <location>
        <begin position="1"/>
        <end position="357"/>
    </location>
</feature>
<feature type="binding site" evidence="1">
    <location>
        <position position="115"/>
    </location>
    <ligand>
        <name>Fe cation</name>
        <dbReference type="ChEBI" id="CHEBI:24875"/>
    </ligand>
</feature>
<feature type="binding site" evidence="1">
    <location>
        <position position="119"/>
    </location>
    <ligand>
        <name>Fe cation</name>
        <dbReference type="ChEBI" id="CHEBI:24875"/>
    </ligand>
</feature>
<feature type="binding site" evidence="1">
    <location>
        <begin position="137"/>
        <end position="141"/>
    </location>
    <ligand>
        <name>substrate</name>
    </ligand>
</feature>
<feature type="binding site" evidence="1">
    <location>
        <position position="170"/>
    </location>
    <ligand>
        <name>substrate</name>
    </ligand>
</feature>
<feature type="binding site" evidence="1">
    <location>
        <position position="183"/>
    </location>
    <ligand>
        <name>substrate</name>
    </ligand>
</feature>
<feature type="binding site" evidence="1">
    <location>
        <position position="281"/>
    </location>
    <ligand>
        <name>substrate</name>
    </ligand>
</feature>
<feature type="binding site" evidence="1">
    <location>
        <position position="309"/>
    </location>
    <ligand>
        <name>Fe cation</name>
        <dbReference type="ChEBI" id="CHEBI:24875"/>
    </ligand>
</feature>
<dbReference type="EC" id="2.3.1.234" evidence="1"/>
<dbReference type="EMBL" id="CP001196">
    <property type="protein sequence ID" value="ACI91474.1"/>
    <property type="molecule type" value="Genomic_DNA"/>
</dbReference>
<dbReference type="EMBL" id="CP002826">
    <property type="protein sequence ID" value="AEI04929.1"/>
    <property type="molecule type" value="Genomic_DNA"/>
</dbReference>
<dbReference type="RefSeq" id="WP_012561505.1">
    <property type="nucleotide sequence ID" value="NC_015684.1"/>
</dbReference>
<dbReference type="SMR" id="B6JAE9"/>
<dbReference type="STRING" id="504832.OCA5_c01980"/>
<dbReference type="KEGG" id="oca:OCAR_4327"/>
<dbReference type="KEGG" id="ocg:OCA5_c01980"/>
<dbReference type="PATRIC" id="fig|504832.7.peg.210"/>
<dbReference type="eggNOG" id="COG0533">
    <property type="taxonomic scope" value="Bacteria"/>
</dbReference>
<dbReference type="HOGENOM" id="CLU_023208_0_2_5"/>
<dbReference type="OrthoDB" id="9806197at2"/>
<dbReference type="Proteomes" id="UP000007730">
    <property type="component" value="Chromosome"/>
</dbReference>
<dbReference type="GO" id="GO:0005737">
    <property type="term" value="C:cytoplasm"/>
    <property type="evidence" value="ECO:0007669"/>
    <property type="project" value="UniProtKB-SubCell"/>
</dbReference>
<dbReference type="GO" id="GO:0005506">
    <property type="term" value="F:iron ion binding"/>
    <property type="evidence" value="ECO:0007669"/>
    <property type="project" value="UniProtKB-UniRule"/>
</dbReference>
<dbReference type="GO" id="GO:0061711">
    <property type="term" value="F:N(6)-L-threonylcarbamoyladenine synthase activity"/>
    <property type="evidence" value="ECO:0007669"/>
    <property type="project" value="UniProtKB-EC"/>
</dbReference>
<dbReference type="GO" id="GO:0002949">
    <property type="term" value="P:tRNA threonylcarbamoyladenosine modification"/>
    <property type="evidence" value="ECO:0007669"/>
    <property type="project" value="UniProtKB-UniRule"/>
</dbReference>
<dbReference type="CDD" id="cd24133">
    <property type="entry name" value="ASKHA_NBD_TsaD_bac"/>
    <property type="match status" value="1"/>
</dbReference>
<dbReference type="FunFam" id="3.30.420.40:FF:000012">
    <property type="entry name" value="tRNA N6-adenosine threonylcarbamoyltransferase"/>
    <property type="match status" value="1"/>
</dbReference>
<dbReference type="Gene3D" id="3.30.420.40">
    <property type="match status" value="2"/>
</dbReference>
<dbReference type="HAMAP" id="MF_01445">
    <property type="entry name" value="TsaD"/>
    <property type="match status" value="1"/>
</dbReference>
<dbReference type="InterPro" id="IPR043129">
    <property type="entry name" value="ATPase_NBD"/>
</dbReference>
<dbReference type="InterPro" id="IPR000905">
    <property type="entry name" value="Gcp-like_dom"/>
</dbReference>
<dbReference type="InterPro" id="IPR017861">
    <property type="entry name" value="KAE1/TsaD"/>
</dbReference>
<dbReference type="InterPro" id="IPR017860">
    <property type="entry name" value="Peptidase_M22_CS"/>
</dbReference>
<dbReference type="InterPro" id="IPR022450">
    <property type="entry name" value="TsaD"/>
</dbReference>
<dbReference type="NCBIfam" id="TIGR00329">
    <property type="entry name" value="gcp_kae1"/>
    <property type="match status" value="1"/>
</dbReference>
<dbReference type="NCBIfam" id="TIGR03723">
    <property type="entry name" value="T6A_TsaD_YgjD"/>
    <property type="match status" value="1"/>
</dbReference>
<dbReference type="PANTHER" id="PTHR11735">
    <property type="entry name" value="TRNA N6-ADENOSINE THREONYLCARBAMOYLTRANSFERASE"/>
    <property type="match status" value="1"/>
</dbReference>
<dbReference type="PANTHER" id="PTHR11735:SF6">
    <property type="entry name" value="TRNA N6-ADENOSINE THREONYLCARBAMOYLTRANSFERASE, MITOCHONDRIAL"/>
    <property type="match status" value="1"/>
</dbReference>
<dbReference type="Pfam" id="PF00814">
    <property type="entry name" value="TsaD"/>
    <property type="match status" value="1"/>
</dbReference>
<dbReference type="PRINTS" id="PR00789">
    <property type="entry name" value="OSIALOPTASE"/>
</dbReference>
<dbReference type="SUPFAM" id="SSF53067">
    <property type="entry name" value="Actin-like ATPase domain"/>
    <property type="match status" value="2"/>
</dbReference>
<dbReference type="PROSITE" id="PS01016">
    <property type="entry name" value="GLYCOPROTEASE"/>
    <property type="match status" value="1"/>
</dbReference>
<proteinExistence type="inferred from homology"/>
<name>TSAD_AFIC5</name>
<comment type="function">
    <text evidence="1">Required for the formation of a threonylcarbamoyl group on adenosine at position 37 (t(6)A37) in tRNAs that read codons beginning with adenine. Is involved in the transfer of the threonylcarbamoyl moiety of threonylcarbamoyl-AMP (TC-AMP) to the N6 group of A37, together with TsaE and TsaB. TsaD likely plays a direct catalytic role in this reaction.</text>
</comment>
<comment type="catalytic activity">
    <reaction evidence="1">
        <text>L-threonylcarbamoyladenylate + adenosine(37) in tRNA = N(6)-L-threonylcarbamoyladenosine(37) in tRNA + AMP + H(+)</text>
        <dbReference type="Rhea" id="RHEA:37059"/>
        <dbReference type="Rhea" id="RHEA-COMP:10162"/>
        <dbReference type="Rhea" id="RHEA-COMP:10163"/>
        <dbReference type="ChEBI" id="CHEBI:15378"/>
        <dbReference type="ChEBI" id="CHEBI:73682"/>
        <dbReference type="ChEBI" id="CHEBI:74411"/>
        <dbReference type="ChEBI" id="CHEBI:74418"/>
        <dbReference type="ChEBI" id="CHEBI:456215"/>
        <dbReference type="EC" id="2.3.1.234"/>
    </reaction>
</comment>
<comment type="cofactor">
    <cofactor evidence="1">
        <name>Fe(2+)</name>
        <dbReference type="ChEBI" id="CHEBI:29033"/>
    </cofactor>
    <text evidence="1">Binds 1 Fe(2+) ion per subunit.</text>
</comment>
<comment type="subcellular location">
    <subcellularLocation>
        <location evidence="1">Cytoplasm</location>
    </subcellularLocation>
</comment>
<comment type="similarity">
    <text evidence="1">Belongs to the KAE1 / TsaD family.</text>
</comment>
<sequence>MLVLGIETTCDETAAAVIERQADGSGRILSNIVRSQIAEHAPFGGVVPEIAARAHVEMLDVLVDRAMREAGVDFAQLDGIAAAAGPGLIGGVIVGLTTAKAIALVHDTPLIAVNHLEAHALTPRLTVPLAFPYCLFLASGGHTQIVAVLGVGEYVRIGTTVDDALGEAFDKVAKMLDLPYPGGPQVERAAREGDPTRFDFPRPMLGRKDANFSLSGLKTAVRNEASRLMPLELQDIADLCASFQAAVLDSIADRIRSGLRLFREQFGTPRALVAAGGVAANVAIRNALQEIAADDEITMIVPPPQLCTDNGAMIAWAGAERLALGLTDTMEAAPRARWKLDATTETPTKFINTRARH</sequence>
<evidence type="ECO:0000255" key="1">
    <source>
        <dbReference type="HAMAP-Rule" id="MF_01445"/>
    </source>
</evidence>
<accession>B6JAE9</accession>
<accession>F8BSQ2</accession>
<reference key="1">
    <citation type="journal article" date="2008" name="J. Bacteriol.">
        <title>Genome sequence of the chemolithoautotrophic bacterium Oligotropha carboxidovorans OM5T.</title>
        <authorList>
            <person name="Paul D."/>
            <person name="Bridges S."/>
            <person name="Burgess S.C."/>
            <person name="Dandass Y."/>
            <person name="Lawrence M.L."/>
        </authorList>
    </citation>
    <scope>NUCLEOTIDE SEQUENCE [LARGE SCALE GENOMIC DNA]</scope>
    <source>
        <strain>ATCC 49405 / DSM 1227 / KCTC 32145 / OM5</strain>
    </source>
</reference>
<reference key="2">
    <citation type="journal article" date="2011" name="J. Bacteriol.">
        <title>Complete genome sequences of the chemolithoautotrophic Oligotropha carboxidovorans strains OM4 and OM5.</title>
        <authorList>
            <person name="Volland S."/>
            <person name="Rachinger M."/>
            <person name="Strittmatter A."/>
            <person name="Daniel R."/>
            <person name="Gottschalk G."/>
            <person name="Meyer O."/>
        </authorList>
    </citation>
    <scope>NUCLEOTIDE SEQUENCE [LARGE SCALE GENOMIC DNA]</scope>
    <source>
        <strain>ATCC 49405 / DSM 1227 / KCTC 32145 / OM5</strain>
    </source>
</reference>
<protein>
    <recommendedName>
        <fullName evidence="1">tRNA N6-adenosine threonylcarbamoyltransferase</fullName>
        <ecNumber evidence="1">2.3.1.234</ecNumber>
    </recommendedName>
    <alternativeName>
        <fullName evidence="1">N6-L-threonylcarbamoyladenine synthase</fullName>
        <shortName evidence="1">t(6)A synthase</shortName>
    </alternativeName>
    <alternativeName>
        <fullName evidence="1">t(6)A37 threonylcarbamoyladenosine biosynthesis protein TsaD</fullName>
    </alternativeName>
    <alternativeName>
        <fullName evidence="1">tRNA threonylcarbamoyladenosine biosynthesis protein TsaD</fullName>
    </alternativeName>
</protein>
<keyword id="KW-0012">Acyltransferase</keyword>
<keyword id="KW-0963">Cytoplasm</keyword>
<keyword id="KW-0408">Iron</keyword>
<keyword id="KW-0479">Metal-binding</keyword>
<keyword id="KW-1185">Reference proteome</keyword>
<keyword id="KW-0808">Transferase</keyword>
<keyword id="KW-0819">tRNA processing</keyword>